<name>BTUDA_HALS3</name>
<proteinExistence type="inferred from homology"/>
<protein>
    <recommendedName>
        <fullName>Cobalamin import ATP-binding protein BtuD</fullName>
        <ecNumber>7.6.2.8</ecNumber>
    </recommendedName>
    <alternativeName>
        <fullName>Vitamin B12-transporting ATPase</fullName>
    </alternativeName>
</protein>
<dbReference type="EC" id="7.6.2.8"/>
<dbReference type="EMBL" id="AM774415">
    <property type="protein sequence ID" value="CAP13981.1"/>
    <property type="molecule type" value="Genomic_DNA"/>
</dbReference>
<dbReference type="RefSeq" id="WP_010902995.1">
    <property type="nucleotide sequence ID" value="NC_010364.1"/>
</dbReference>
<dbReference type="SMR" id="B0R5G4"/>
<dbReference type="EnsemblBacteria" id="CAP13981">
    <property type="protein sequence ID" value="CAP13981"/>
    <property type="gene ID" value="OE_2955F"/>
</dbReference>
<dbReference type="KEGG" id="hsl:OE_2955F"/>
<dbReference type="HOGENOM" id="CLU_000604_0_0_2"/>
<dbReference type="PhylomeDB" id="B0R5G4"/>
<dbReference type="Proteomes" id="UP000001321">
    <property type="component" value="Chromosome"/>
</dbReference>
<dbReference type="GO" id="GO:0005886">
    <property type="term" value="C:plasma membrane"/>
    <property type="evidence" value="ECO:0007669"/>
    <property type="project" value="UniProtKB-SubCell"/>
</dbReference>
<dbReference type="GO" id="GO:0015420">
    <property type="term" value="F:ABC-type vitamin B12 transporter activity"/>
    <property type="evidence" value="ECO:0007669"/>
    <property type="project" value="UniProtKB-EC"/>
</dbReference>
<dbReference type="GO" id="GO:0005524">
    <property type="term" value="F:ATP binding"/>
    <property type="evidence" value="ECO:0007669"/>
    <property type="project" value="UniProtKB-KW"/>
</dbReference>
<dbReference type="GO" id="GO:0016887">
    <property type="term" value="F:ATP hydrolysis activity"/>
    <property type="evidence" value="ECO:0007669"/>
    <property type="project" value="InterPro"/>
</dbReference>
<dbReference type="CDD" id="cd03214">
    <property type="entry name" value="ABC_Iron-Siderophores_B12_Hemin"/>
    <property type="match status" value="1"/>
</dbReference>
<dbReference type="FunFam" id="3.40.50.300:FF:000134">
    <property type="entry name" value="Iron-enterobactin ABC transporter ATP-binding protein"/>
    <property type="match status" value="1"/>
</dbReference>
<dbReference type="Gene3D" id="3.40.50.300">
    <property type="entry name" value="P-loop containing nucleotide triphosphate hydrolases"/>
    <property type="match status" value="1"/>
</dbReference>
<dbReference type="InterPro" id="IPR003593">
    <property type="entry name" value="AAA+_ATPase"/>
</dbReference>
<dbReference type="InterPro" id="IPR003439">
    <property type="entry name" value="ABC_transporter-like_ATP-bd"/>
</dbReference>
<dbReference type="InterPro" id="IPR017871">
    <property type="entry name" value="ABC_transporter-like_CS"/>
</dbReference>
<dbReference type="InterPro" id="IPR027417">
    <property type="entry name" value="P-loop_NTPase"/>
</dbReference>
<dbReference type="NCBIfam" id="NF007082">
    <property type="entry name" value="PRK09536.1"/>
    <property type="match status" value="1"/>
</dbReference>
<dbReference type="NCBIfam" id="NF010068">
    <property type="entry name" value="PRK13548.1"/>
    <property type="match status" value="1"/>
</dbReference>
<dbReference type="PANTHER" id="PTHR42794">
    <property type="entry name" value="HEMIN IMPORT ATP-BINDING PROTEIN HMUV"/>
    <property type="match status" value="1"/>
</dbReference>
<dbReference type="PANTHER" id="PTHR42794:SF1">
    <property type="entry name" value="HEMIN IMPORT ATP-BINDING PROTEIN HMUV"/>
    <property type="match status" value="1"/>
</dbReference>
<dbReference type="Pfam" id="PF00005">
    <property type="entry name" value="ABC_tran"/>
    <property type="match status" value="1"/>
</dbReference>
<dbReference type="SMART" id="SM00382">
    <property type="entry name" value="AAA"/>
    <property type="match status" value="1"/>
</dbReference>
<dbReference type="SUPFAM" id="SSF52540">
    <property type="entry name" value="P-loop containing nucleoside triphosphate hydrolases"/>
    <property type="match status" value="1"/>
</dbReference>
<dbReference type="PROSITE" id="PS00211">
    <property type="entry name" value="ABC_TRANSPORTER_1"/>
    <property type="match status" value="1"/>
</dbReference>
<dbReference type="PROSITE" id="PS50893">
    <property type="entry name" value="ABC_TRANSPORTER_2"/>
    <property type="match status" value="1"/>
</dbReference>
<organism>
    <name type="scientific">Halobacterium salinarum (strain ATCC 29341 / DSM 671 / R1)</name>
    <dbReference type="NCBI Taxonomy" id="478009"/>
    <lineage>
        <taxon>Archaea</taxon>
        <taxon>Methanobacteriati</taxon>
        <taxon>Methanobacteriota</taxon>
        <taxon>Stenosarchaea group</taxon>
        <taxon>Halobacteria</taxon>
        <taxon>Halobacteriales</taxon>
        <taxon>Halobacteriaceae</taxon>
        <taxon>Halobacterium</taxon>
        <taxon>Halobacterium salinarum NRC-34001</taxon>
    </lineage>
</organism>
<gene>
    <name type="primary">btuD</name>
    <name type="ordered locus">OE_2955F</name>
</gene>
<sequence length="398" mass="40466">MTLDVTGLDVELAGTRILDDVHASIRDGHLVGVVGPNGAGKSTLLRAMNGLITPTAGTVLVAGDDVHALSSAAASRRIATVPQDASVSFEFTVRQVVEMGRHPHTTRFGTDTDTAVVDRAMARTGVAQFAARDVTSLSGGERQRVLLARALAQAAPVLLLDEPTASLDVNHQIRTLEVVRDLADSEDRAVVAAIHDLDLAARYCDELVVVADGRVHDAGAPRSVLTPDTIRAAFDARVAVGTDPATGAVTVTPLPDRTSAAADTSVHVVGGGDSATPVVRRLVSAGASVSVGPVVEGDTDHETARRVGCPCTSVAPFTRLEDTTAASATRADIAAADVIAVPVAAAARPGVRGLLTGAVPTLAVGDAAGAPEWADRLVACDAVVSAVGALADTPSDGV</sequence>
<reference key="1">
    <citation type="journal article" date="2008" name="Genomics">
        <title>Evolution in the laboratory: the genome of Halobacterium salinarum strain R1 compared to that of strain NRC-1.</title>
        <authorList>
            <person name="Pfeiffer F."/>
            <person name="Schuster S.C."/>
            <person name="Broicher A."/>
            <person name="Falb M."/>
            <person name="Palm P."/>
            <person name="Rodewald K."/>
            <person name="Ruepp A."/>
            <person name="Soppa J."/>
            <person name="Tittor J."/>
            <person name="Oesterhelt D."/>
        </authorList>
    </citation>
    <scope>NUCLEOTIDE SEQUENCE [LARGE SCALE GENOMIC DNA]</scope>
    <source>
        <strain>ATCC 29341 / DSM 671 / R1</strain>
    </source>
</reference>
<accession>B0R5G4</accession>
<keyword id="KW-0067">ATP-binding</keyword>
<keyword id="KW-1003">Cell membrane</keyword>
<keyword id="KW-0472">Membrane</keyword>
<keyword id="KW-0547">Nucleotide-binding</keyword>
<keyword id="KW-1278">Translocase</keyword>
<keyword id="KW-0813">Transport</keyword>
<evidence type="ECO:0000250" key="1"/>
<evidence type="ECO:0000255" key="2">
    <source>
        <dbReference type="PROSITE-ProRule" id="PRU00434"/>
    </source>
</evidence>
<evidence type="ECO:0000305" key="3"/>
<feature type="chain" id="PRO_0000408970" description="Cobalamin import ATP-binding protein BtuD">
    <location>
        <begin position="1"/>
        <end position="398"/>
    </location>
</feature>
<feature type="domain" description="ABC transporter" evidence="2">
    <location>
        <begin position="3"/>
        <end position="237"/>
    </location>
</feature>
<feature type="binding site" evidence="2">
    <location>
        <begin position="35"/>
        <end position="42"/>
    </location>
    <ligand>
        <name>ATP</name>
        <dbReference type="ChEBI" id="CHEBI:30616"/>
    </ligand>
</feature>
<comment type="function">
    <text evidence="1">Required for corrinoid utilization. Probably part of the ABC transporter complex BtuCDF involved in cobalamin (vitamin B12) import. Probably responsible for energy coupling to the transport system (By similarity).</text>
</comment>
<comment type="catalytic activity">
    <reaction>
        <text>an R-cob(III)alamin(out) + ATP + H2O = an R-cob(III)alamin(in) + ADP + phosphate + H(+)</text>
        <dbReference type="Rhea" id="RHEA:17873"/>
        <dbReference type="ChEBI" id="CHEBI:15377"/>
        <dbReference type="ChEBI" id="CHEBI:15378"/>
        <dbReference type="ChEBI" id="CHEBI:30616"/>
        <dbReference type="ChEBI" id="CHEBI:43474"/>
        <dbReference type="ChEBI" id="CHEBI:140785"/>
        <dbReference type="ChEBI" id="CHEBI:456216"/>
        <dbReference type="EC" id="7.6.2.8"/>
    </reaction>
</comment>
<comment type="subunit">
    <text evidence="1">The complex is composed of two ATP-binding proteins (BtuD), two transmembrane proteins (BtuC) and a solute-binding protein (BtuF).</text>
</comment>
<comment type="subcellular location">
    <subcellularLocation>
        <location evidence="1">Cell membrane</location>
        <topology evidence="1">Peripheral membrane protein</topology>
    </subcellularLocation>
</comment>
<comment type="similarity">
    <text evidence="3">Belongs to the ABC transporter superfamily.</text>
</comment>